<organism>
    <name type="scientific">Bos taurus</name>
    <name type="common">Bovine</name>
    <dbReference type="NCBI Taxonomy" id="9913"/>
    <lineage>
        <taxon>Eukaryota</taxon>
        <taxon>Metazoa</taxon>
        <taxon>Chordata</taxon>
        <taxon>Craniata</taxon>
        <taxon>Vertebrata</taxon>
        <taxon>Euteleostomi</taxon>
        <taxon>Mammalia</taxon>
        <taxon>Eutheria</taxon>
        <taxon>Laurasiatheria</taxon>
        <taxon>Artiodactyla</taxon>
        <taxon>Ruminantia</taxon>
        <taxon>Pecora</taxon>
        <taxon>Bovidae</taxon>
        <taxon>Bovinae</taxon>
        <taxon>Bos</taxon>
    </lineage>
</organism>
<name>FAIM1_BOVIN</name>
<reference key="1">
    <citation type="submission" date="2006-08" db="EMBL/GenBank/DDBJ databases">
        <authorList>
            <consortium name="NIH - Mammalian Gene Collection (MGC) project"/>
        </authorList>
    </citation>
    <scope>NUCLEOTIDE SEQUENCE [LARGE SCALE MRNA]</scope>
    <source>
        <strain>Hereford</strain>
        <tissue>Fetal cerebellum</tissue>
    </source>
</reference>
<comment type="function">
    <text evidence="1">Plays a role as an inducible effector molecule that mediates Fas resistance produced by surface Ig engagement in B cells.</text>
</comment>
<comment type="subcellular location">
    <subcellularLocation>
        <location evidence="1">Cytoplasm</location>
    </subcellularLocation>
</comment>
<comment type="similarity">
    <text evidence="2">Belongs to the FAIM1 family.</text>
</comment>
<keyword id="KW-0053">Apoptosis</keyword>
<keyword id="KW-0963">Cytoplasm</keyword>
<keyword id="KW-1185">Reference proteome</keyword>
<dbReference type="EMBL" id="BC122668">
    <property type="protein sequence ID" value="AAI22669.1"/>
    <property type="molecule type" value="mRNA"/>
</dbReference>
<dbReference type="RefSeq" id="NP_001073094.1">
    <property type="nucleotide sequence ID" value="NM_001079626.2"/>
</dbReference>
<dbReference type="SMR" id="Q0IIF6"/>
<dbReference type="FunCoup" id="Q0IIF6">
    <property type="interactions" value="2169"/>
</dbReference>
<dbReference type="STRING" id="9913.ENSBTAP00000031873"/>
<dbReference type="PaxDb" id="9913-ENSBTAP00000031873"/>
<dbReference type="Ensembl" id="ENSBTAT00000031927.6">
    <property type="protein sequence ID" value="ENSBTAP00000031873.4"/>
    <property type="gene ID" value="ENSBTAG00000023426.6"/>
</dbReference>
<dbReference type="GeneID" id="616795"/>
<dbReference type="KEGG" id="bta:616795"/>
<dbReference type="CTD" id="55179"/>
<dbReference type="VEuPathDB" id="HostDB:ENSBTAG00000023426"/>
<dbReference type="VGNC" id="VGNC:28709">
    <property type="gene designation" value="FAIM"/>
</dbReference>
<dbReference type="eggNOG" id="KOG4352">
    <property type="taxonomic scope" value="Eukaryota"/>
</dbReference>
<dbReference type="GeneTree" id="ENSGT00390000007364"/>
<dbReference type="HOGENOM" id="CLU_109086_0_0_1"/>
<dbReference type="InParanoid" id="Q0IIF6"/>
<dbReference type="OMA" id="SQEYRIM"/>
<dbReference type="OrthoDB" id="6262731at2759"/>
<dbReference type="TreeFam" id="TF314971"/>
<dbReference type="Proteomes" id="UP000009136">
    <property type="component" value="Chromosome 1"/>
</dbReference>
<dbReference type="Bgee" id="ENSBTAG00000023426">
    <property type="expression patterns" value="Expressed in retina and 105 other cell types or tissues"/>
</dbReference>
<dbReference type="GO" id="GO:0005737">
    <property type="term" value="C:cytoplasm"/>
    <property type="evidence" value="ECO:0007669"/>
    <property type="project" value="UniProtKB-SubCell"/>
</dbReference>
<dbReference type="GO" id="GO:0006915">
    <property type="term" value="P:apoptotic process"/>
    <property type="evidence" value="ECO:0007669"/>
    <property type="project" value="UniProtKB-KW"/>
</dbReference>
<dbReference type="GO" id="GO:1902042">
    <property type="term" value="P:negative regulation of extrinsic apoptotic signaling pathway via death domain receptors"/>
    <property type="evidence" value="ECO:0000318"/>
    <property type="project" value="GO_Central"/>
</dbReference>
<dbReference type="FunFam" id="2.40.128.180:FF:000001">
    <property type="entry name" value="Fas apoptotic inhibitory molecule 1"/>
    <property type="match status" value="1"/>
</dbReference>
<dbReference type="FunFam" id="2.40.128.180:FF:000002">
    <property type="entry name" value="Fas apoptotic inhibitory molecule 1"/>
    <property type="match status" value="1"/>
</dbReference>
<dbReference type="Gene3D" id="2.40.128.180">
    <property type="match status" value="2"/>
</dbReference>
<dbReference type="InterPro" id="IPR010695">
    <property type="entry name" value="FAIM1"/>
</dbReference>
<dbReference type="InterPro" id="IPR038513">
    <property type="entry name" value="FAIM1_dom_sf"/>
</dbReference>
<dbReference type="PANTHER" id="PTHR13088:SF3">
    <property type="entry name" value="FAS APOPTOTIC INHIBITORY MOLECULE 1"/>
    <property type="match status" value="1"/>
</dbReference>
<dbReference type="PANTHER" id="PTHR13088">
    <property type="entry name" value="FAS APOPTOTIC INHIBITORY MOLECULE FAIM"/>
    <property type="match status" value="1"/>
</dbReference>
<dbReference type="Pfam" id="PF06905">
    <property type="entry name" value="FAIM1"/>
    <property type="match status" value="1"/>
</dbReference>
<gene>
    <name type="primary">FAIM</name>
</gene>
<accession>Q0IIF6</accession>
<feature type="chain" id="PRO_0000282882" description="Fas apoptotic inhibitory molecule 1">
    <location>
        <begin position="1"/>
        <end position="201"/>
    </location>
</feature>
<sequence length="201" mass="22648">MASGDDSPIFEDDESPPYSLEKMTDLVAVWEVALSDGVHKIEFEHGTTSGKRVVYVDGKEVIRKEWMFKLVGKETFCVGAAKTKATINIDAVSGFAYEYTLEINGKSLKKYMENRSKTTNTWVLHLDSEDFRVVLEKDTLDVWCNGKKMETAGEFVDDGTETHFNIGNHDCYIKAVSSGKRKEGIIHSLIVDNREIPEIVE</sequence>
<evidence type="ECO:0000250" key="1"/>
<evidence type="ECO:0000305" key="2"/>
<proteinExistence type="evidence at transcript level"/>
<protein>
    <recommendedName>
        <fullName>Fas apoptotic inhibitory molecule 1</fullName>
    </recommendedName>
</protein>